<comment type="function">
    <text evidence="1">Catalyzes the cyclization of GTP to (8S)-3',8-cyclo-7,8-dihydroguanosine 5'-triphosphate.</text>
</comment>
<comment type="catalytic activity">
    <reaction evidence="1">
        <text>GTP + AH2 + S-adenosyl-L-methionine = (8S)-3',8-cyclo-7,8-dihydroguanosine 5'-triphosphate + 5'-deoxyadenosine + L-methionine + A + H(+)</text>
        <dbReference type="Rhea" id="RHEA:49576"/>
        <dbReference type="ChEBI" id="CHEBI:13193"/>
        <dbReference type="ChEBI" id="CHEBI:15378"/>
        <dbReference type="ChEBI" id="CHEBI:17319"/>
        <dbReference type="ChEBI" id="CHEBI:17499"/>
        <dbReference type="ChEBI" id="CHEBI:37565"/>
        <dbReference type="ChEBI" id="CHEBI:57844"/>
        <dbReference type="ChEBI" id="CHEBI:59789"/>
        <dbReference type="ChEBI" id="CHEBI:131766"/>
        <dbReference type="EC" id="4.1.99.22"/>
    </reaction>
</comment>
<comment type="cofactor">
    <cofactor evidence="1">
        <name>[4Fe-4S] cluster</name>
        <dbReference type="ChEBI" id="CHEBI:49883"/>
    </cofactor>
    <text evidence="1">Binds 2 [4Fe-4S] clusters. Binds 1 [4Fe-4S] cluster coordinated with 3 cysteines and an exchangeable S-adenosyl-L-methionine and 1 [4Fe-4S] cluster coordinated with 3 cysteines and the GTP-derived substrate.</text>
</comment>
<comment type="pathway">
    <text evidence="1">Cofactor biosynthesis; molybdopterin biosynthesis.</text>
</comment>
<comment type="subunit">
    <text evidence="1">Monomer and homodimer.</text>
</comment>
<comment type="similarity">
    <text evidence="1">Belongs to the radical SAM superfamily. MoaA family.</text>
</comment>
<keyword id="KW-0004">4Fe-4S</keyword>
<keyword id="KW-0342">GTP-binding</keyword>
<keyword id="KW-0408">Iron</keyword>
<keyword id="KW-0411">Iron-sulfur</keyword>
<keyword id="KW-0456">Lyase</keyword>
<keyword id="KW-0479">Metal-binding</keyword>
<keyword id="KW-0501">Molybdenum cofactor biosynthesis</keyword>
<keyword id="KW-0547">Nucleotide-binding</keyword>
<keyword id="KW-1185">Reference proteome</keyword>
<keyword id="KW-0949">S-adenosyl-L-methionine</keyword>
<sequence length="328" mass="36878">MNQVDYLRISLIDRCNFRCQYCMPEGSELNYILKQQLLTDEELLTLVQEVFIPVGFRQFRLTGGEPLLRPHVVDLVGAIASLPQTQDLSMTTNGFLLAPIAQNLYDAGLRRINISLDSLDPHIFDQIIGSHGRPRWQQVWDGIQAAHRVGFDPLKLNVVVIPGVNDHEILDLAALSIDKQWHVRFIEFMPIGNGELFGDRGWVSSAELRQQIRDRWGLTDAQVRGAGPADVFQIPGAKGTLGFISQMSECFCDRCNRMRLSADGWLRPCLLNETGQLDLKTSLRSGVSIHQLREQVRHLLAIKPEINYKGRDSGTTGVYSRTMSQIGG</sequence>
<reference key="1">
    <citation type="journal article" date="2001" name="DNA Res.">
        <title>Complete genomic sequence of the filamentous nitrogen-fixing cyanobacterium Anabaena sp. strain PCC 7120.</title>
        <authorList>
            <person name="Kaneko T."/>
            <person name="Nakamura Y."/>
            <person name="Wolk C.P."/>
            <person name="Kuritz T."/>
            <person name="Sasamoto S."/>
            <person name="Watanabe A."/>
            <person name="Iriguchi M."/>
            <person name="Ishikawa A."/>
            <person name="Kawashima K."/>
            <person name="Kimura T."/>
            <person name="Kishida Y."/>
            <person name="Kohara M."/>
            <person name="Matsumoto M."/>
            <person name="Matsuno A."/>
            <person name="Muraki A."/>
            <person name="Nakazaki N."/>
            <person name="Shimpo S."/>
            <person name="Sugimoto M."/>
            <person name="Takazawa M."/>
            <person name="Yamada M."/>
            <person name="Yasuda M."/>
            <person name="Tabata S."/>
        </authorList>
    </citation>
    <scope>NUCLEOTIDE SEQUENCE [LARGE SCALE GENOMIC DNA]</scope>
    <source>
        <strain>PCC 7120 / SAG 25.82 / UTEX 2576</strain>
    </source>
</reference>
<dbReference type="EC" id="4.1.99.22" evidence="1"/>
<dbReference type="EMBL" id="BA000019">
    <property type="protein sequence ID" value="BAB75564.1"/>
    <property type="molecule type" value="Genomic_DNA"/>
</dbReference>
<dbReference type="PIR" id="AB2289">
    <property type="entry name" value="AB2289"/>
</dbReference>
<dbReference type="RefSeq" id="WP_010998006.1">
    <property type="nucleotide sequence ID" value="NZ_RSCN01000011.1"/>
</dbReference>
<dbReference type="SMR" id="Q8YQG6"/>
<dbReference type="STRING" id="103690.gene:10495907"/>
<dbReference type="KEGG" id="ana:all3865"/>
<dbReference type="eggNOG" id="COG2896">
    <property type="taxonomic scope" value="Bacteria"/>
</dbReference>
<dbReference type="OrthoDB" id="9763993at2"/>
<dbReference type="UniPathway" id="UPA00344"/>
<dbReference type="Proteomes" id="UP000002483">
    <property type="component" value="Chromosome"/>
</dbReference>
<dbReference type="GO" id="GO:0051539">
    <property type="term" value="F:4 iron, 4 sulfur cluster binding"/>
    <property type="evidence" value="ECO:0007669"/>
    <property type="project" value="UniProtKB-UniRule"/>
</dbReference>
<dbReference type="GO" id="GO:0061799">
    <property type="term" value="F:cyclic pyranopterin monophosphate synthase activity"/>
    <property type="evidence" value="ECO:0007669"/>
    <property type="project" value="TreeGrafter"/>
</dbReference>
<dbReference type="GO" id="GO:0061798">
    <property type="term" value="F:GTP 3',8'-cyclase activity"/>
    <property type="evidence" value="ECO:0007669"/>
    <property type="project" value="UniProtKB-UniRule"/>
</dbReference>
<dbReference type="GO" id="GO:0005525">
    <property type="term" value="F:GTP binding"/>
    <property type="evidence" value="ECO:0007669"/>
    <property type="project" value="UniProtKB-UniRule"/>
</dbReference>
<dbReference type="GO" id="GO:0046872">
    <property type="term" value="F:metal ion binding"/>
    <property type="evidence" value="ECO:0007669"/>
    <property type="project" value="UniProtKB-KW"/>
</dbReference>
<dbReference type="GO" id="GO:1904047">
    <property type="term" value="F:S-adenosyl-L-methionine binding"/>
    <property type="evidence" value="ECO:0007669"/>
    <property type="project" value="UniProtKB-UniRule"/>
</dbReference>
<dbReference type="GO" id="GO:0006777">
    <property type="term" value="P:Mo-molybdopterin cofactor biosynthetic process"/>
    <property type="evidence" value="ECO:0007669"/>
    <property type="project" value="UniProtKB-UniRule"/>
</dbReference>
<dbReference type="CDD" id="cd01335">
    <property type="entry name" value="Radical_SAM"/>
    <property type="match status" value="1"/>
</dbReference>
<dbReference type="CDD" id="cd21117">
    <property type="entry name" value="Twitch_MoaA"/>
    <property type="match status" value="1"/>
</dbReference>
<dbReference type="Gene3D" id="3.20.20.70">
    <property type="entry name" value="Aldolase class I"/>
    <property type="match status" value="1"/>
</dbReference>
<dbReference type="HAMAP" id="MF_01225_B">
    <property type="entry name" value="MoaA_B"/>
    <property type="match status" value="1"/>
</dbReference>
<dbReference type="InterPro" id="IPR013785">
    <property type="entry name" value="Aldolase_TIM"/>
</dbReference>
<dbReference type="InterPro" id="IPR006638">
    <property type="entry name" value="Elp3/MiaA/NifB-like_rSAM"/>
</dbReference>
<dbReference type="InterPro" id="IPR013483">
    <property type="entry name" value="MoaA"/>
</dbReference>
<dbReference type="InterPro" id="IPR000385">
    <property type="entry name" value="MoaA_NifB_PqqE_Fe-S-bd_CS"/>
</dbReference>
<dbReference type="InterPro" id="IPR010505">
    <property type="entry name" value="MoaA_twitch"/>
</dbReference>
<dbReference type="InterPro" id="IPR050105">
    <property type="entry name" value="MoCo_biosynth_MoaA/MoaC"/>
</dbReference>
<dbReference type="InterPro" id="IPR007197">
    <property type="entry name" value="rSAM"/>
</dbReference>
<dbReference type="NCBIfam" id="TIGR02666">
    <property type="entry name" value="moaA"/>
    <property type="match status" value="1"/>
</dbReference>
<dbReference type="PANTHER" id="PTHR22960:SF0">
    <property type="entry name" value="MOLYBDENUM COFACTOR BIOSYNTHESIS PROTEIN 1"/>
    <property type="match status" value="1"/>
</dbReference>
<dbReference type="PANTHER" id="PTHR22960">
    <property type="entry name" value="MOLYBDOPTERIN COFACTOR SYNTHESIS PROTEIN A"/>
    <property type="match status" value="1"/>
</dbReference>
<dbReference type="Pfam" id="PF13353">
    <property type="entry name" value="Fer4_12"/>
    <property type="match status" value="1"/>
</dbReference>
<dbReference type="Pfam" id="PF06463">
    <property type="entry name" value="Mob_synth_C"/>
    <property type="match status" value="1"/>
</dbReference>
<dbReference type="Pfam" id="PF04055">
    <property type="entry name" value="Radical_SAM"/>
    <property type="match status" value="1"/>
</dbReference>
<dbReference type="SFLD" id="SFLDG01383">
    <property type="entry name" value="cyclic_pyranopterin_phosphate"/>
    <property type="match status" value="1"/>
</dbReference>
<dbReference type="SFLD" id="SFLDS00029">
    <property type="entry name" value="Radical_SAM"/>
    <property type="match status" value="1"/>
</dbReference>
<dbReference type="SMART" id="SM00729">
    <property type="entry name" value="Elp3"/>
    <property type="match status" value="1"/>
</dbReference>
<dbReference type="SUPFAM" id="SSF102114">
    <property type="entry name" value="Radical SAM enzymes"/>
    <property type="match status" value="1"/>
</dbReference>
<dbReference type="PROSITE" id="PS01305">
    <property type="entry name" value="MOAA_NIFB_PQQE"/>
    <property type="match status" value="1"/>
</dbReference>
<dbReference type="PROSITE" id="PS51918">
    <property type="entry name" value="RADICAL_SAM"/>
    <property type="match status" value="1"/>
</dbReference>
<proteinExistence type="inferred from homology"/>
<organism>
    <name type="scientific">Nostoc sp. (strain PCC 7120 / SAG 25.82 / UTEX 2576)</name>
    <dbReference type="NCBI Taxonomy" id="103690"/>
    <lineage>
        <taxon>Bacteria</taxon>
        <taxon>Bacillati</taxon>
        <taxon>Cyanobacteriota</taxon>
        <taxon>Cyanophyceae</taxon>
        <taxon>Nostocales</taxon>
        <taxon>Nostocaceae</taxon>
        <taxon>Nostoc</taxon>
    </lineage>
</organism>
<feature type="chain" id="PRO_0000152945" description="GTP 3',8-cyclase">
    <location>
        <begin position="1"/>
        <end position="328"/>
    </location>
</feature>
<feature type="domain" description="Radical SAM core" evidence="2">
    <location>
        <begin position="1"/>
        <end position="229"/>
    </location>
</feature>
<feature type="binding site" evidence="1">
    <location>
        <position position="8"/>
    </location>
    <ligand>
        <name>GTP</name>
        <dbReference type="ChEBI" id="CHEBI:37565"/>
    </ligand>
</feature>
<feature type="binding site" evidence="1">
    <location>
        <position position="15"/>
    </location>
    <ligand>
        <name>[4Fe-4S] cluster</name>
        <dbReference type="ChEBI" id="CHEBI:49883"/>
        <label>1</label>
        <note>4Fe-4S-S-AdoMet</note>
    </ligand>
</feature>
<feature type="binding site" evidence="1">
    <location>
        <position position="19"/>
    </location>
    <ligand>
        <name>[4Fe-4S] cluster</name>
        <dbReference type="ChEBI" id="CHEBI:49883"/>
        <label>1</label>
        <note>4Fe-4S-S-AdoMet</note>
    </ligand>
</feature>
<feature type="binding site" evidence="1">
    <location>
        <position position="21"/>
    </location>
    <ligand>
        <name>S-adenosyl-L-methionine</name>
        <dbReference type="ChEBI" id="CHEBI:59789"/>
    </ligand>
</feature>
<feature type="binding site" evidence="1">
    <location>
        <position position="22"/>
    </location>
    <ligand>
        <name>[4Fe-4S] cluster</name>
        <dbReference type="ChEBI" id="CHEBI:49883"/>
        <label>1</label>
        <note>4Fe-4S-S-AdoMet</note>
    </ligand>
</feature>
<feature type="binding site" evidence="1">
    <location>
        <position position="60"/>
    </location>
    <ligand>
        <name>GTP</name>
        <dbReference type="ChEBI" id="CHEBI:37565"/>
    </ligand>
</feature>
<feature type="binding site" evidence="1">
    <location>
        <position position="64"/>
    </location>
    <ligand>
        <name>S-adenosyl-L-methionine</name>
        <dbReference type="ChEBI" id="CHEBI:59789"/>
    </ligand>
</feature>
<feature type="binding site" evidence="1">
    <location>
        <position position="91"/>
    </location>
    <ligand>
        <name>GTP</name>
        <dbReference type="ChEBI" id="CHEBI:37565"/>
    </ligand>
</feature>
<feature type="binding site" evidence="1">
    <location>
        <position position="115"/>
    </location>
    <ligand>
        <name>S-adenosyl-L-methionine</name>
        <dbReference type="ChEBI" id="CHEBI:59789"/>
    </ligand>
</feature>
<feature type="binding site" evidence="1">
    <location>
        <position position="155"/>
    </location>
    <ligand>
        <name>GTP</name>
        <dbReference type="ChEBI" id="CHEBI:37565"/>
    </ligand>
</feature>
<feature type="binding site" evidence="1">
    <location>
        <position position="189"/>
    </location>
    <ligand>
        <name>S-adenosyl-L-methionine</name>
        <dbReference type="ChEBI" id="CHEBI:59789"/>
    </ligand>
</feature>
<feature type="binding site" evidence="1">
    <location>
        <position position="252"/>
    </location>
    <ligand>
        <name>[4Fe-4S] cluster</name>
        <dbReference type="ChEBI" id="CHEBI:49883"/>
        <label>2</label>
        <note>4Fe-4S-substrate</note>
    </ligand>
</feature>
<feature type="binding site" evidence="1">
    <location>
        <position position="255"/>
    </location>
    <ligand>
        <name>[4Fe-4S] cluster</name>
        <dbReference type="ChEBI" id="CHEBI:49883"/>
        <label>2</label>
        <note>4Fe-4S-substrate</note>
    </ligand>
</feature>
<feature type="binding site" evidence="1">
    <location>
        <begin position="257"/>
        <end position="259"/>
    </location>
    <ligand>
        <name>GTP</name>
        <dbReference type="ChEBI" id="CHEBI:37565"/>
    </ligand>
</feature>
<feature type="binding site" evidence="1">
    <location>
        <position position="269"/>
    </location>
    <ligand>
        <name>[4Fe-4S] cluster</name>
        <dbReference type="ChEBI" id="CHEBI:49883"/>
        <label>2</label>
        <note>4Fe-4S-substrate</note>
    </ligand>
</feature>
<evidence type="ECO:0000255" key="1">
    <source>
        <dbReference type="HAMAP-Rule" id="MF_01225"/>
    </source>
</evidence>
<evidence type="ECO:0000255" key="2">
    <source>
        <dbReference type="PROSITE-ProRule" id="PRU01266"/>
    </source>
</evidence>
<name>MOAA_NOSS1</name>
<gene>
    <name evidence="1" type="primary">moaA</name>
    <name type="ordered locus">all3865</name>
</gene>
<protein>
    <recommendedName>
        <fullName evidence="1">GTP 3',8-cyclase</fullName>
        <ecNumber evidence="1">4.1.99.22</ecNumber>
    </recommendedName>
    <alternativeName>
        <fullName evidence="1">Molybdenum cofactor biosynthesis protein A</fullName>
    </alternativeName>
</protein>
<accession>Q8YQG6</accession>